<keyword id="KW-0007">Acetylation</keyword>
<keyword id="KW-0067">ATP-binding</keyword>
<keyword id="KW-0963">Cytoplasm</keyword>
<keyword id="KW-0210">Decarboxylase</keyword>
<keyword id="KW-0312">Gluconeogenesis</keyword>
<keyword id="KW-0456">Lyase</keyword>
<keyword id="KW-0464">Manganese</keyword>
<keyword id="KW-0479">Metal-binding</keyword>
<keyword id="KW-0547">Nucleotide-binding</keyword>
<keyword id="KW-1185">Reference proteome</keyword>
<proteinExistence type="inferred from homology"/>
<gene>
    <name evidence="1" type="primary">pckA</name>
    <name type="ordered locus">SSON_3534</name>
</gene>
<sequence length="540" mass="59643">MRVNNGLTPQELEAYGISDVHDIVYNPSYDLLYQEELDPSLTGYERGVLTNLGAVAVDTGIFTGRSPKDKYIVRDDTTRDTFWWADKGKGKNDNKPLSPETWQHLKGLVTRQLSGKRLFVVDAFCGANPDTRLSVRFITEVAWQAHFVKNMFIRPSDEELAGFKPDFIVMNGAKCTNPQWKEQGLNSENFVAFNLTERMQLIGGTWYGGEMKKGMFSMMNYLLPLKGIASMHCSANVGEKGDVAVFFGLSGTGKTTLSTDPKRRLIGDDEHGWDDDGVFNFEGGCYAKTIKLSKEAEPEIYNAIRRDALLENVTVREDGTIDFDDGSKTENTRVSYPIYHIDNIVKPVSKAGHATKVIFLTADAFGVLPPVSRLTADQTQYHFLSGFTAKLAGTERGITEPTPTFSACFGAAFLSLHPTQYAEVLVKRMQAAGAQAYLVNTGWNGTGKRISIKDTRAIIDAILNGSLDNAETFTLPMFNLAIPTELPGVDTKILDPRNTYASPEQWQEKAETLAKLFIDNFDKYTDTPAGAALVAAGPKL</sequence>
<reference key="1">
    <citation type="journal article" date="2005" name="Nucleic Acids Res.">
        <title>Genome dynamics and diversity of Shigella species, the etiologic agents of bacillary dysentery.</title>
        <authorList>
            <person name="Yang F."/>
            <person name="Yang J."/>
            <person name="Zhang X."/>
            <person name="Chen L."/>
            <person name="Jiang Y."/>
            <person name="Yan Y."/>
            <person name="Tang X."/>
            <person name="Wang J."/>
            <person name="Xiong Z."/>
            <person name="Dong J."/>
            <person name="Xue Y."/>
            <person name="Zhu Y."/>
            <person name="Xu X."/>
            <person name="Sun L."/>
            <person name="Chen S."/>
            <person name="Nie H."/>
            <person name="Peng J."/>
            <person name="Xu J."/>
            <person name="Wang Y."/>
            <person name="Yuan Z."/>
            <person name="Wen Y."/>
            <person name="Yao Z."/>
            <person name="Shen Y."/>
            <person name="Qiang B."/>
            <person name="Hou Y."/>
            <person name="Yu J."/>
            <person name="Jin Q."/>
        </authorList>
    </citation>
    <scope>NUCLEOTIDE SEQUENCE [LARGE SCALE GENOMIC DNA]</scope>
    <source>
        <strain>Ss046</strain>
    </source>
</reference>
<protein>
    <recommendedName>
        <fullName evidence="1">Phosphoenolpyruvate carboxykinase (ATP)</fullName>
        <shortName evidence="1">PCK</shortName>
        <shortName evidence="1">PEP carboxykinase</shortName>
        <shortName evidence="1">PEPCK</shortName>
        <ecNumber evidence="1">4.1.1.49</ecNumber>
    </recommendedName>
</protein>
<feature type="chain" id="PRO_0000236945" description="Phosphoenolpyruvate carboxykinase (ATP)">
    <location>
        <begin position="1"/>
        <end position="540"/>
    </location>
</feature>
<feature type="binding site" evidence="1">
    <location>
        <position position="65"/>
    </location>
    <ligand>
        <name>substrate</name>
    </ligand>
</feature>
<feature type="binding site" evidence="1">
    <location>
        <position position="207"/>
    </location>
    <ligand>
        <name>substrate</name>
    </ligand>
</feature>
<feature type="binding site" evidence="1">
    <location>
        <position position="213"/>
    </location>
    <ligand>
        <name>ATP</name>
        <dbReference type="ChEBI" id="CHEBI:30616"/>
    </ligand>
</feature>
<feature type="binding site" evidence="1">
    <location>
        <position position="213"/>
    </location>
    <ligand>
        <name>Mn(2+)</name>
        <dbReference type="ChEBI" id="CHEBI:29035"/>
    </ligand>
</feature>
<feature type="binding site" evidence="1">
    <location>
        <position position="213"/>
    </location>
    <ligand>
        <name>substrate</name>
    </ligand>
</feature>
<feature type="binding site" evidence="1">
    <location>
        <position position="232"/>
    </location>
    <ligand>
        <name>ATP</name>
        <dbReference type="ChEBI" id="CHEBI:30616"/>
    </ligand>
</feature>
<feature type="binding site" evidence="1">
    <location>
        <position position="232"/>
    </location>
    <ligand>
        <name>Mn(2+)</name>
        <dbReference type="ChEBI" id="CHEBI:29035"/>
    </ligand>
</feature>
<feature type="binding site" evidence="1">
    <location>
        <begin position="248"/>
        <end position="256"/>
    </location>
    <ligand>
        <name>ATP</name>
        <dbReference type="ChEBI" id="CHEBI:30616"/>
    </ligand>
</feature>
<feature type="binding site" evidence="1">
    <location>
        <position position="269"/>
    </location>
    <ligand>
        <name>Mn(2+)</name>
        <dbReference type="ChEBI" id="CHEBI:29035"/>
    </ligand>
</feature>
<feature type="binding site" evidence="1">
    <location>
        <position position="297"/>
    </location>
    <ligand>
        <name>ATP</name>
        <dbReference type="ChEBI" id="CHEBI:30616"/>
    </ligand>
</feature>
<feature type="binding site" evidence="1">
    <location>
        <position position="333"/>
    </location>
    <ligand>
        <name>ATP</name>
        <dbReference type="ChEBI" id="CHEBI:30616"/>
    </ligand>
</feature>
<feature type="binding site" evidence="1">
    <location>
        <position position="333"/>
    </location>
    <ligand>
        <name>substrate</name>
    </ligand>
</feature>
<feature type="binding site" evidence="1">
    <location>
        <begin position="449"/>
        <end position="450"/>
    </location>
    <ligand>
        <name>ATP</name>
        <dbReference type="ChEBI" id="CHEBI:30616"/>
    </ligand>
</feature>
<feature type="binding site" evidence="1">
    <location>
        <position position="455"/>
    </location>
    <ligand>
        <name>ATP</name>
        <dbReference type="ChEBI" id="CHEBI:30616"/>
    </ligand>
</feature>
<feature type="modified residue" description="N6-acetyllysine" evidence="1">
    <location>
        <position position="87"/>
    </location>
</feature>
<feature type="modified residue" description="N6-acetyllysine" evidence="1">
    <location>
        <position position="523"/>
    </location>
</feature>
<dbReference type="EC" id="4.1.1.49" evidence="1"/>
<dbReference type="EMBL" id="CP000038">
    <property type="protein sequence ID" value="AAZ90090.1"/>
    <property type="molecule type" value="Genomic_DNA"/>
</dbReference>
<dbReference type="RefSeq" id="WP_001265681.1">
    <property type="nucleotide sequence ID" value="NC_007384.1"/>
</dbReference>
<dbReference type="SMR" id="Q3YWM2"/>
<dbReference type="KEGG" id="ssn:SSON_3534"/>
<dbReference type="HOGENOM" id="CLU_018247_0_1_6"/>
<dbReference type="UniPathway" id="UPA00138"/>
<dbReference type="Proteomes" id="UP000002529">
    <property type="component" value="Chromosome"/>
</dbReference>
<dbReference type="GO" id="GO:0005829">
    <property type="term" value="C:cytosol"/>
    <property type="evidence" value="ECO:0007669"/>
    <property type="project" value="TreeGrafter"/>
</dbReference>
<dbReference type="GO" id="GO:0005524">
    <property type="term" value="F:ATP binding"/>
    <property type="evidence" value="ECO:0007669"/>
    <property type="project" value="UniProtKB-UniRule"/>
</dbReference>
<dbReference type="GO" id="GO:0046872">
    <property type="term" value="F:metal ion binding"/>
    <property type="evidence" value="ECO:0007669"/>
    <property type="project" value="UniProtKB-KW"/>
</dbReference>
<dbReference type="GO" id="GO:0004612">
    <property type="term" value="F:phosphoenolpyruvate carboxykinase (ATP) activity"/>
    <property type="evidence" value="ECO:0007669"/>
    <property type="project" value="UniProtKB-UniRule"/>
</dbReference>
<dbReference type="GO" id="GO:0006094">
    <property type="term" value="P:gluconeogenesis"/>
    <property type="evidence" value="ECO:0007669"/>
    <property type="project" value="UniProtKB-UniRule"/>
</dbReference>
<dbReference type="CDD" id="cd00484">
    <property type="entry name" value="PEPCK_ATP"/>
    <property type="match status" value="1"/>
</dbReference>
<dbReference type="FunFam" id="2.170.8.10:FF:000001">
    <property type="entry name" value="Phosphoenolpyruvate carboxykinase (ATP)"/>
    <property type="match status" value="1"/>
</dbReference>
<dbReference type="FunFam" id="3.40.449.10:FF:000001">
    <property type="entry name" value="Phosphoenolpyruvate carboxykinase (ATP)"/>
    <property type="match status" value="1"/>
</dbReference>
<dbReference type="Gene3D" id="3.90.228.20">
    <property type="match status" value="1"/>
</dbReference>
<dbReference type="Gene3D" id="3.40.449.10">
    <property type="entry name" value="Phosphoenolpyruvate Carboxykinase, domain 1"/>
    <property type="match status" value="1"/>
</dbReference>
<dbReference type="Gene3D" id="2.170.8.10">
    <property type="entry name" value="Phosphoenolpyruvate Carboxykinase, domain 2"/>
    <property type="match status" value="1"/>
</dbReference>
<dbReference type="HAMAP" id="MF_00453">
    <property type="entry name" value="PEPCK_ATP"/>
    <property type="match status" value="1"/>
</dbReference>
<dbReference type="InterPro" id="IPR001272">
    <property type="entry name" value="PEP_carboxykinase_ATP"/>
</dbReference>
<dbReference type="InterPro" id="IPR013035">
    <property type="entry name" value="PEP_carboxykinase_C"/>
</dbReference>
<dbReference type="InterPro" id="IPR008210">
    <property type="entry name" value="PEP_carboxykinase_N"/>
</dbReference>
<dbReference type="InterPro" id="IPR015994">
    <property type="entry name" value="PEPCK_ATP_CS"/>
</dbReference>
<dbReference type="NCBIfam" id="TIGR00224">
    <property type="entry name" value="pckA"/>
    <property type="match status" value="1"/>
</dbReference>
<dbReference type="NCBIfam" id="NF006819">
    <property type="entry name" value="PRK09344.1-1"/>
    <property type="match status" value="1"/>
</dbReference>
<dbReference type="NCBIfam" id="NF006820">
    <property type="entry name" value="PRK09344.1-2"/>
    <property type="match status" value="1"/>
</dbReference>
<dbReference type="NCBIfam" id="NF006821">
    <property type="entry name" value="PRK09344.1-3"/>
    <property type="match status" value="1"/>
</dbReference>
<dbReference type="PANTHER" id="PTHR30031:SF0">
    <property type="entry name" value="PHOSPHOENOLPYRUVATE CARBOXYKINASE (ATP)"/>
    <property type="match status" value="1"/>
</dbReference>
<dbReference type="PANTHER" id="PTHR30031">
    <property type="entry name" value="PHOSPHOENOLPYRUVATE CARBOXYKINASE ATP"/>
    <property type="match status" value="1"/>
</dbReference>
<dbReference type="Pfam" id="PF01293">
    <property type="entry name" value="PEPCK_ATP"/>
    <property type="match status" value="1"/>
</dbReference>
<dbReference type="PIRSF" id="PIRSF006294">
    <property type="entry name" value="PEP_crbxkin"/>
    <property type="match status" value="1"/>
</dbReference>
<dbReference type="SUPFAM" id="SSF68923">
    <property type="entry name" value="PEP carboxykinase N-terminal domain"/>
    <property type="match status" value="1"/>
</dbReference>
<dbReference type="SUPFAM" id="SSF53795">
    <property type="entry name" value="PEP carboxykinase-like"/>
    <property type="match status" value="1"/>
</dbReference>
<dbReference type="PROSITE" id="PS00532">
    <property type="entry name" value="PEPCK_ATP"/>
    <property type="match status" value="1"/>
</dbReference>
<name>PCKA_SHISS</name>
<evidence type="ECO:0000255" key="1">
    <source>
        <dbReference type="HAMAP-Rule" id="MF_00453"/>
    </source>
</evidence>
<accession>Q3YWM2</accession>
<organism>
    <name type="scientific">Shigella sonnei (strain Ss046)</name>
    <dbReference type="NCBI Taxonomy" id="300269"/>
    <lineage>
        <taxon>Bacteria</taxon>
        <taxon>Pseudomonadati</taxon>
        <taxon>Pseudomonadota</taxon>
        <taxon>Gammaproteobacteria</taxon>
        <taxon>Enterobacterales</taxon>
        <taxon>Enterobacteriaceae</taxon>
        <taxon>Shigella</taxon>
    </lineage>
</organism>
<comment type="function">
    <text evidence="1">Involved in the gluconeogenesis. Catalyzes the conversion of oxaloacetate (OAA) to phosphoenolpyruvate (PEP) through direct phosphoryl transfer between the nucleoside triphosphate and OAA.</text>
</comment>
<comment type="catalytic activity">
    <reaction evidence="1">
        <text>oxaloacetate + ATP = phosphoenolpyruvate + ADP + CO2</text>
        <dbReference type="Rhea" id="RHEA:18617"/>
        <dbReference type="ChEBI" id="CHEBI:16452"/>
        <dbReference type="ChEBI" id="CHEBI:16526"/>
        <dbReference type="ChEBI" id="CHEBI:30616"/>
        <dbReference type="ChEBI" id="CHEBI:58702"/>
        <dbReference type="ChEBI" id="CHEBI:456216"/>
        <dbReference type="EC" id="4.1.1.49"/>
    </reaction>
</comment>
<comment type="cofactor">
    <cofactor evidence="1">
        <name>Mn(2+)</name>
        <dbReference type="ChEBI" id="CHEBI:29035"/>
    </cofactor>
    <text evidence="1">Binds 1 Mn(2+) ion per subunit.</text>
</comment>
<comment type="pathway">
    <text evidence="1">Carbohydrate biosynthesis; gluconeogenesis.</text>
</comment>
<comment type="subunit">
    <text evidence="1">Monomer.</text>
</comment>
<comment type="subcellular location">
    <subcellularLocation>
        <location evidence="1">Cytoplasm</location>
    </subcellularLocation>
</comment>
<comment type="similarity">
    <text evidence="1">Belongs to the phosphoenolpyruvate carboxykinase (ATP) family.</text>
</comment>